<organism>
    <name type="scientific">Picosynechococcus sp. (strain ATCC 27264 / PCC 7002 / PR-6)</name>
    <name type="common">Agmenellum quadruplicatum</name>
    <dbReference type="NCBI Taxonomy" id="32049"/>
    <lineage>
        <taxon>Bacteria</taxon>
        <taxon>Bacillati</taxon>
        <taxon>Cyanobacteriota</taxon>
        <taxon>Cyanophyceae</taxon>
        <taxon>Oscillatoriophycideae</taxon>
        <taxon>Chroococcales</taxon>
        <taxon>Geminocystaceae</taxon>
        <taxon>Picosynechococcus</taxon>
    </lineage>
</organism>
<evidence type="ECO:0000250" key="1">
    <source>
        <dbReference type="UniProtKB" id="Q9KNM4"/>
    </source>
</evidence>
<evidence type="ECO:0000250" key="2">
    <source>
        <dbReference type="UniProtKB" id="Q9KTX4"/>
    </source>
</evidence>
<evidence type="ECO:0000255" key="3">
    <source>
        <dbReference type="HAMAP-Rule" id="MF_00451"/>
    </source>
</evidence>
<accession>B1XIE7</accession>
<protein>
    <recommendedName>
        <fullName evidence="3">Nucleoside diphosphate kinase</fullName>
        <shortName evidence="3">NDK</shortName>
        <shortName evidence="3">NDP kinase</shortName>
        <ecNumber evidence="3">2.7.4.6</ecNumber>
    </recommendedName>
    <alternativeName>
        <fullName evidence="3">Nucleoside-2-P kinase</fullName>
    </alternativeName>
</protein>
<reference key="1">
    <citation type="submission" date="2008-02" db="EMBL/GenBank/DDBJ databases">
        <title>Complete sequence of Synechococcus sp. PCC 7002.</title>
        <authorList>
            <person name="Li T."/>
            <person name="Zhao J."/>
            <person name="Zhao C."/>
            <person name="Liu Z."/>
            <person name="Zhao F."/>
            <person name="Marquardt J."/>
            <person name="Nomura C.T."/>
            <person name="Persson S."/>
            <person name="Detter J.C."/>
            <person name="Richardson P.M."/>
            <person name="Lanz C."/>
            <person name="Schuster S.C."/>
            <person name="Wang J."/>
            <person name="Li S."/>
            <person name="Huang X."/>
            <person name="Cai T."/>
            <person name="Yu Z."/>
            <person name="Luo J."/>
            <person name="Zhao J."/>
            <person name="Bryant D.A."/>
        </authorList>
    </citation>
    <scope>NUCLEOTIDE SEQUENCE [LARGE SCALE GENOMIC DNA]</scope>
    <source>
        <strain>ATCC 27264 / PCC 7002 / PR-6</strain>
    </source>
</reference>
<sequence length="149" mass="16352">MERTFVMVKPDGVQRGLVGDVIRRFEAKGFKLVGLKLVSVSRELAEQHYGVHRERPFFGSLVEFIISVPVVAMVWEGKGAIAAARKIIGATNPLEAEPGTIRGDFGVDIGRNLIHGSDGPDTAASEIALWFSESELANWEPATKAWLYE</sequence>
<dbReference type="EC" id="2.7.4.6" evidence="3"/>
<dbReference type="EMBL" id="CP000951">
    <property type="protein sequence ID" value="ACA98818.1"/>
    <property type="molecule type" value="Genomic_DNA"/>
</dbReference>
<dbReference type="RefSeq" id="WP_012306442.1">
    <property type="nucleotide sequence ID" value="NZ_JAHHPU010000001.1"/>
</dbReference>
<dbReference type="SMR" id="B1XIE7"/>
<dbReference type="STRING" id="32049.SYNPCC7002_A0814"/>
<dbReference type="KEGG" id="syp:SYNPCC7002_A0814"/>
<dbReference type="eggNOG" id="COG0105">
    <property type="taxonomic scope" value="Bacteria"/>
</dbReference>
<dbReference type="HOGENOM" id="CLU_060216_6_3_3"/>
<dbReference type="Proteomes" id="UP000001688">
    <property type="component" value="Chromosome"/>
</dbReference>
<dbReference type="GO" id="GO:0005737">
    <property type="term" value="C:cytoplasm"/>
    <property type="evidence" value="ECO:0007669"/>
    <property type="project" value="UniProtKB-SubCell"/>
</dbReference>
<dbReference type="GO" id="GO:0005524">
    <property type="term" value="F:ATP binding"/>
    <property type="evidence" value="ECO:0007669"/>
    <property type="project" value="UniProtKB-UniRule"/>
</dbReference>
<dbReference type="GO" id="GO:0046872">
    <property type="term" value="F:metal ion binding"/>
    <property type="evidence" value="ECO:0007669"/>
    <property type="project" value="UniProtKB-KW"/>
</dbReference>
<dbReference type="GO" id="GO:0004550">
    <property type="term" value="F:nucleoside diphosphate kinase activity"/>
    <property type="evidence" value="ECO:0007669"/>
    <property type="project" value="UniProtKB-UniRule"/>
</dbReference>
<dbReference type="GO" id="GO:0006241">
    <property type="term" value="P:CTP biosynthetic process"/>
    <property type="evidence" value="ECO:0007669"/>
    <property type="project" value="UniProtKB-UniRule"/>
</dbReference>
<dbReference type="GO" id="GO:0006183">
    <property type="term" value="P:GTP biosynthetic process"/>
    <property type="evidence" value="ECO:0007669"/>
    <property type="project" value="UniProtKB-UniRule"/>
</dbReference>
<dbReference type="GO" id="GO:0006228">
    <property type="term" value="P:UTP biosynthetic process"/>
    <property type="evidence" value="ECO:0007669"/>
    <property type="project" value="UniProtKB-UniRule"/>
</dbReference>
<dbReference type="CDD" id="cd04413">
    <property type="entry name" value="NDPk_I"/>
    <property type="match status" value="1"/>
</dbReference>
<dbReference type="FunFam" id="3.30.70.141:FF:000002">
    <property type="entry name" value="Nucleoside diphosphate kinase"/>
    <property type="match status" value="1"/>
</dbReference>
<dbReference type="Gene3D" id="3.30.70.141">
    <property type="entry name" value="Nucleoside diphosphate kinase-like domain"/>
    <property type="match status" value="1"/>
</dbReference>
<dbReference type="HAMAP" id="MF_00451">
    <property type="entry name" value="NDP_kinase"/>
    <property type="match status" value="1"/>
</dbReference>
<dbReference type="InterPro" id="IPR034907">
    <property type="entry name" value="NDK-like_dom"/>
</dbReference>
<dbReference type="InterPro" id="IPR036850">
    <property type="entry name" value="NDK-like_dom_sf"/>
</dbReference>
<dbReference type="InterPro" id="IPR001564">
    <property type="entry name" value="Nucleoside_diP_kinase"/>
</dbReference>
<dbReference type="InterPro" id="IPR023005">
    <property type="entry name" value="Nucleoside_diP_kinase_AS"/>
</dbReference>
<dbReference type="NCBIfam" id="NF001908">
    <property type="entry name" value="PRK00668.1"/>
    <property type="match status" value="1"/>
</dbReference>
<dbReference type="PANTHER" id="PTHR11349">
    <property type="entry name" value="NUCLEOSIDE DIPHOSPHATE KINASE"/>
    <property type="match status" value="1"/>
</dbReference>
<dbReference type="Pfam" id="PF00334">
    <property type="entry name" value="NDK"/>
    <property type="match status" value="1"/>
</dbReference>
<dbReference type="PRINTS" id="PR01243">
    <property type="entry name" value="NUCDPKINASE"/>
</dbReference>
<dbReference type="SMART" id="SM00562">
    <property type="entry name" value="NDK"/>
    <property type="match status" value="1"/>
</dbReference>
<dbReference type="SUPFAM" id="SSF54919">
    <property type="entry name" value="Nucleoside diphosphate kinase, NDK"/>
    <property type="match status" value="1"/>
</dbReference>
<dbReference type="PROSITE" id="PS00469">
    <property type="entry name" value="NDPK"/>
    <property type="match status" value="1"/>
</dbReference>
<dbReference type="PROSITE" id="PS51374">
    <property type="entry name" value="NDPK_LIKE"/>
    <property type="match status" value="1"/>
</dbReference>
<gene>
    <name evidence="3" type="primary">ndk</name>
    <name type="ordered locus">SYNPCC7002_A0814</name>
</gene>
<proteinExistence type="inferred from homology"/>
<feature type="chain" id="PRO_1000125025" description="Nucleoside diphosphate kinase">
    <location>
        <begin position="1"/>
        <end position="149"/>
    </location>
</feature>
<feature type="active site" description="Pros-phosphohistidine intermediate" evidence="3">
    <location>
        <position position="115"/>
    </location>
</feature>
<feature type="binding site" evidence="3">
    <location>
        <position position="9"/>
    </location>
    <ligand>
        <name>ATP</name>
        <dbReference type="ChEBI" id="CHEBI:30616"/>
    </ligand>
</feature>
<feature type="binding site" evidence="3">
    <location>
        <position position="57"/>
    </location>
    <ligand>
        <name>ATP</name>
        <dbReference type="ChEBI" id="CHEBI:30616"/>
    </ligand>
</feature>
<feature type="binding site" evidence="3">
    <location>
        <position position="85"/>
    </location>
    <ligand>
        <name>ATP</name>
        <dbReference type="ChEBI" id="CHEBI:30616"/>
    </ligand>
</feature>
<feature type="binding site" evidence="3">
    <location>
        <position position="91"/>
    </location>
    <ligand>
        <name>ATP</name>
        <dbReference type="ChEBI" id="CHEBI:30616"/>
    </ligand>
</feature>
<feature type="binding site" evidence="3">
    <location>
        <position position="102"/>
    </location>
    <ligand>
        <name>ATP</name>
        <dbReference type="ChEBI" id="CHEBI:30616"/>
    </ligand>
</feature>
<feature type="binding site" evidence="3">
    <location>
        <position position="112"/>
    </location>
    <ligand>
        <name>ATP</name>
        <dbReference type="ChEBI" id="CHEBI:30616"/>
    </ligand>
</feature>
<keyword id="KW-0067">ATP-binding</keyword>
<keyword id="KW-0963">Cytoplasm</keyword>
<keyword id="KW-0418">Kinase</keyword>
<keyword id="KW-0460">Magnesium</keyword>
<keyword id="KW-0479">Metal-binding</keyword>
<keyword id="KW-0546">Nucleotide metabolism</keyword>
<keyword id="KW-0547">Nucleotide-binding</keyword>
<keyword id="KW-0597">Phosphoprotein</keyword>
<keyword id="KW-1185">Reference proteome</keyword>
<keyword id="KW-0808">Transferase</keyword>
<name>NDK_PICP2</name>
<comment type="function">
    <text evidence="3">Major role in the synthesis of nucleoside triphosphates other than ATP. The ATP gamma phosphate is transferred to the NDP beta phosphate via a ping-pong mechanism, using a phosphorylated active-site intermediate.</text>
</comment>
<comment type="function">
    <text evidence="1">(Microbial infection) Catalyzes the phosphorylation of dZDP to dZTP, when the bacterium is infected by a phage that produces the substrate for the synthesis of dZTP (2- amino-2'-deoxyadenosine 5'-triphosphate), which is then used by the phage as a DNA polymerase substrate.</text>
</comment>
<comment type="catalytic activity">
    <reaction evidence="2">
        <text>dZDP + ATP = dZTP + ADP</text>
        <dbReference type="Rhea" id="RHEA:67644"/>
        <dbReference type="ChEBI" id="CHEBI:30616"/>
        <dbReference type="ChEBI" id="CHEBI:172929"/>
        <dbReference type="ChEBI" id="CHEBI:172931"/>
        <dbReference type="ChEBI" id="CHEBI:456216"/>
    </reaction>
</comment>
<comment type="catalytic activity">
    <reaction evidence="3">
        <text>a 2'-deoxyribonucleoside 5'-diphosphate + ATP = a 2'-deoxyribonucleoside 5'-triphosphate + ADP</text>
        <dbReference type="Rhea" id="RHEA:44640"/>
        <dbReference type="ChEBI" id="CHEBI:30616"/>
        <dbReference type="ChEBI" id="CHEBI:61560"/>
        <dbReference type="ChEBI" id="CHEBI:73316"/>
        <dbReference type="ChEBI" id="CHEBI:456216"/>
        <dbReference type="EC" id="2.7.4.6"/>
    </reaction>
</comment>
<comment type="catalytic activity">
    <reaction evidence="3">
        <text>a ribonucleoside 5'-diphosphate + ATP = a ribonucleoside 5'-triphosphate + ADP</text>
        <dbReference type="Rhea" id="RHEA:18113"/>
        <dbReference type="ChEBI" id="CHEBI:30616"/>
        <dbReference type="ChEBI" id="CHEBI:57930"/>
        <dbReference type="ChEBI" id="CHEBI:61557"/>
        <dbReference type="ChEBI" id="CHEBI:456216"/>
        <dbReference type="EC" id="2.7.4.6"/>
    </reaction>
</comment>
<comment type="cofactor">
    <cofactor evidence="3">
        <name>Mg(2+)</name>
        <dbReference type="ChEBI" id="CHEBI:18420"/>
    </cofactor>
</comment>
<comment type="pathway">
    <text evidence="2">Purine metabolism.</text>
</comment>
<comment type="subunit">
    <text evidence="3">Homotetramer.</text>
</comment>
<comment type="subcellular location">
    <subcellularLocation>
        <location evidence="3">Cytoplasm</location>
    </subcellularLocation>
</comment>
<comment type="similarity">
    <text evidence="3">Belongs to the NDK family.</text>
</comment>